<accession>Q7N8N6</accession>
<feature type="chain" id="PRO_0000091708" description="3-hydroxyacyl-[acyl-carrier-protein] dehydratase FabZ">
    <location>
        <begin position="1"/>
        <end position="150"/>
    </location>
</feature>
<feature type="active site" evidence="1">
    <location>
        <position position="53"/>
    </location>
</feature>
<gene>
    <name evidence="1" type="primary">fabZ</name>
    <name type="ordered locus">plu0683</name>
</gene>
<organism>
    <name type="scientific">Photorhabdus laumondii subsp. laumondii (strain DSM 15139 / CIP 105565 / TT01)</name>
    <name type="common">Photorhabdus luminescens subsp. laumondii</name>
    <dbReference type="NCBI Taxonomy" id="243265"/>
    <lineage>
        <taxon>Bacteria</taxon>
        <taxon>Pseudomonadati</taxon>
        <taxon>Pseudomonadota</taxon>
        <taxon>Gammaproteobacteria</taxon>
        <taxon>Enterobacterales</taxon>
        <taxon>Morganellaceae</taxon>
        <taxon>Photorhabdus</taxon>
    </lineage>
</organism>
<comment type="function">
    <text evidence="1">Involved in unsaturated fatty acids biosynthesis. Catalyzes the dehydration of short chain beta-hydroxyacyl-ACPs and long chain saturated and unsaturated beta-hydroxyacyl-ACPs.</text>
</comment>
<comment type="catalytic activity">
    <reaction evidence="1">
        <text>a (3R)-hydroxyacyl-[ACP] = a (2E)-enoyl-[ACP] + H2O</text>
        <dbReference type="Rhea" id="RHEA:13097"/>
        <dbReference type="Rhea" id="RHEA-COMP:9925"/>
        <dbReference type="Rhea" id="RHEA-COMP:9945"/>
        <dbReference type="ChEBI" id="CHEBI:15377"/>
        <dbReference type="ChEBI" id="CHEBI:78784"/>
        <dbReference type="ChEBI" id="CHEBI:78827"/>
        <dbReference type="EC" id="4.2.1.59"/>
    </reaction>
</comment>
<comment type="subcellular location">
    <subcellularLocation>
        <location evidence="1">Cytoplasm</location>
    </subcellularLocation>
</comment>
<comment type="similarity">
    <text evidence="1">Belongs to the thioester dehydratase family. FabZ subfamily.</text>
</comment>
<name>FABZ_PHOLL</name>
<keyword id="KW-0963">Cytoplasm</keyword>
<keyword id="KW-0441">Lipid A biosynthesis</keyword>
<keyword id="KW-0444">Lipid biosynthesis</keyword>
<keyword id="KW-0443">Lipid metabolism</keyword>
<keyword id="KW-0456">Lyase</keyword>
<keyword id="KW-1185">Reference proteome</keyword>
<reference key="1">
    <citation type="journal article" date="2003" name="Nat. Biotechnol.">
        <title>The genome sequence of the entomopathogenic bacterium Photorhabdus luminescens.</title>
        <authorList>
            <person name="Duchaud E."/>
            <person name="Rusniok C."/>
            <person name="Frangeul L."/>
            <person name="Buchrieser C."/>
            <person name="Givaudan A."/>
            <person name="Taourit S."/>
            <person name="Bocs S."/>
            <person name="Boursaux-Eude C."/>
            <person name="Chandler M."/>
            <person name="Charles J.-F."/>
            <person name="Dassa E."/>
            <person name="Derose R."/>
            <person name="Derzelle S."/>
            <person name="Freyssinet G."/>
            <person name="Gaudriault S."/>
            <person name="Medigue C."/>
            <person name="Lanois A."/>
            <person name="Powell K."/>
            <person name="Siguier P."/>
            <person name="Vincent R."/>
            <person name="Wingate V."/>
            <person name="Zouine M."/>
            <person name="Glaser P."/>
            <person name="Boemare N."/>
            <person name="Danchin A."/>
            <person name="Kunst F."/>
        </authorList>
    </citation>
    <scope>NUCLEOTIDE SEQUENCE [LARGE SCALE GENOMIC DNA]</scope>
    <source>
        <strain>DSM 15139 / CIP 105565 / TT01</strain>
    </source>
</reference>
<proteinExistence type="inferred from homology"/>
<evidence type="ECO:0000255" key="1">
    <source>
        <dbReference type="HAMAP-Rule" id="MF_00406"/>
    </source>
</evidence>
<sequence length="150" mass="17079">MSDNHTLHIEEILDLLPHRYPFLLVDRVLDFEEGKFLRAVKNVSFNEPFFQGHFPGKPIFPGVLILEAMAQATGILAFRSVGKLEPNELYYFAAIDGARFKRPVVPGDQMILEVEFIKERRGVARCRGVAKVDGEIACEAEMMCARRREV</sequence>
<protein>
    <recommendedName>
        <fullName evidence="1">3-hydroxyacyl-[acyl-carrier-protein] dehydratase FabZ</fullName>
        <ecNumber evidence="1">4.2.1.59</ecNumber>
    </recommendedName>
    <alternativeName>
        <fullName evidence="1">(3R)-hydroxymyristoyl-[acyl-carrier-protein] dehydratase</fullName>
        <shortName evidence="1">(3R)-hydroxymyristoyl-ACP dehydrase</shortName>
    </alternativeName>
    <alternativeName>
        <fullName evidence="1">Beta-hydroxyacyl-ACP dehydratase</fullName>
    </alternativeName>
</protein>
<dbReference type="EC" id="4.2.1.59" evidence="1"/>
<dbReference type="EMBL" id="BX571861">
    <property type="protein sequence ID" value="CAE12978.1"/>
    <property type="molecule type" value="Genomic_DNA"/>
</dbReference>
<dbReference type="RefSeq" id="WP_011145059.1">
    <property type="nucleotide sequence ID" value="NC_005126.1"/>
</dbReference>
<dbReference type="SMR" id="Q7N8N6"/>
<dbReference type="STRING" id="243265.plu0683"/>
<dbReference type="GeneID" id="48846972"/>
<dbReference type="KEGG" id="plu:plu0683"/>
<dbReference type="eggNOG" id="COG0764">
    <property type="taxonomic scope" value="Bacteria"/>
</dbReference>
<dbReference type="HOGENOM" id="CLU_078912_1_0_6"/>
<dbReference type="OrthoDB" id="9772788at2"/>
<dbReference type="Proteomes" id="UP000002514">
    <property type="component" value="Chromosome"/>
</dbReference>
<dbReference type="GO" id="GO:0005737">
    <property type="term" value="C:cytoplasm"/>
    <property type="evidence" value="ECO:0007669"/>
    <property type="project" value="UniProtKB-SubCell"/>
</dbReference>
<dbReference type="GO" id="GO:0016020">
    <property type="term" value="C:membrane"/>
    <property type="evidence" value="ECO:0007669"/>
    <property type="project" value="GOC"/>
</dbReference>
<dbReference type="GO" id="GO:0019171">
    <property type="term" value="F:(3R)-hydroxyacyl-[acyl-carrier-protein] dehydratase activity"/>
    <property type="evidence" value="ECO:0007669"/>
    <property type="project" value="UniProtKB-EC"/>
</dbReference>
<dbReference type="GO" id="GO:0006633">
    <property type="term" value="P:fatty acid biosynthetic process"/>
    <property type="evidence" value="ECO:0007669"/>
    <property type="project" value="UniProtKB-UniRule"/>
</dbReference>
<dbReference type="GO" id="GO:0009245">
    <property type="term" value="P:lipid A biosynthetic process"/>
    <property type="evidence" value="ECO:0007669"/>
    <property type="project" value="UniProtKB-UniRule"/>
</dbReference>
<dbReference type="CDD" id="cd01288">
    <property type="entry name" value="FabZ"/>
    <property type="match status" value="1"/>
</dbReference>
<dbReference type="FunFam" id="3.10.129.10:FF:000001">
    <property type="entry name" value="3-hydroxyacyl-[acyl-carrier-protein] dehydratase FabZ"/>
    <property type="match status" value="1"/>
</dbReference>
<dbReference type="Gene3D" id="3.10.129.10">
    <property type="entry name" value="Hotdog Thioesterase"/>
    <property type="match status" value="1"/>
</dbReference>
<dbReference type="HAMAP" id="MF_00406">
    <property type="entry name" value="FabZ"/>
    <property type="match status" value="1"/>
</dbReference>
<dbReference type="InterPro" id="IPR013114">
    <property type="entry name" value="FabA_FabZ"/>
</dbReference>
<dbReference type="InterPro" id="IPR010084">
    <property type="entry name" value="FabZ"/>
</dbReference>
<dbReference type="InterPro" id="IPR029069">
    <property type="entry name" value="HotDog_dom_sf"/>
</dbReference>
<dbReference type="NCBIfam" id="TIGR01750">
    <property type="entry name" value="fabZ"/>
    <property type="match status" value="1"/>
</dbReference>
<dbReference type="NCBIfam" id="NF000582">
    <property type="entry name" value="PRK00006.1"/>
    <property type="match status" value="1"/>
</dbReference>
<dbReference type="PANTHER" id="PTHR30272">
    <property type="entry name" value="3-HYDROXYACYL-[ACYL-CARRIER-PROTEIN] DEHYDRATASE"/>
    <property type="match status" value="1"/>
</dbReference>
<dbReference type="PANTHER" id="PTHR30272:SF1">
    <property type="entry name" value="3-HYDROXYACYL-[ACYL-CARRIER-PROTEIN] DEHYDRATASE"/>
    <property type="match status" value="1"/>
</dbReference>
<dbReference type="Pfam" id="PF07977">
    <property type="entry name" value="FabA"/>
    <property type="match status" value="1"/>
</dbReference>
<dbReference type="SUPFAM" id="SSF54637">
    <property type="entry name" value="Thioesterase/thiol ester dehydrase-isomerase"/>
    <property type="match status" value="1"/>
</dbReference>